<comment type="function">
    <text evidence="1">The function of this enzyme is unclear as allantoicase activity is not known to exist in mammals.</text>
</comment>
<comment type="similarity">
    <text evidence="2">Belongs to the allantoicase family.</text>
</comment>
<reference key="1">
    <citation type="submission" date="2005-06" db="EMBL/GenBank/DDBJ databases">
        <title>DNA sequences of macaque genes expressed in brain or testis and its evolutionary implications.</title>
        <authorList>
            <consortium name="International consortium for macaque cDNA sequencing and analysis"/>
        </authorList>
    </citation>
    <scope>NUCLEOTIDE SEQUENCE [LARGE SCALE MRNA]</scope>
    <source>
        <tissue>Testis</tissue>
    </source>
</reference>
<organism>
    <name type="scientific">Macaca fascicularis</name>
    <name type="common">Crab-eating macaque</name>
    <name type="synonym">Cynomolgus monkey</name>
    <dbReference type="NCBI Taxonomy" id="9541"/>
    <lineage>
        <taxon>Eukaryota</taxon>
        <taxon>Metazoa</taxon>
        <taxon>Chordata</taxon>
        <taxon>Craniata</taxon>
        <taxon>Vertebrata</taxon>
        <taxon>Euteleostomi</taxon>
        <taxon>Mammalia</taxon>
        <taxon>Eutheria</taxon>
        <taxon>Euarchontoglires</taxon>
        <taxon>Primates</taxon>
        <taxon>Haplorrhini</taxon>
        <taxon>Catarrhini</taxon>
        <taxon>Cercopithecidae</taxon>
        <taxon>Cercopithecinae</taxon>
        <taxon>Macaca</taxon>
    </lineage>
</organism>
<gene>
    <name type="primary">ALLC</name>
    <name type="ORF">QtsA-10645</name>
</gene>
<keyword id="KW-1185">Reference proteome</keyword>
<evidence type="ECO:0000250" key="1">
    <source>
        <dbReference type="UniProtKB" id="Q8N6M5"/>
    </source>
</evidence>
<evidence type="ECO:0000305" key="2"/>
<protein>
    <recommendedName>
        <fullName>Probable inactive allantoicase</fullName>
    </recommendedName>
    <alternativeName>
        <fullName>Allantoate amidinohydrolase</fullName>
    </alternativeName>
</protein>
<dbReference type="EMBL" id="AB168232">
    <property type="protein sequence ID" value="BAE00357.1"/>
    <property type="molecule type" value="mRNA"/>
</dbReference>
<dbReference type="RefSeq" id="NP_001271036.1">
    <property type="nucleotide sequence ID" value="NM_001284107.1"/>
</dbReference>
<dbReference type="RefSeq" id="XP_045225792.1">
    <property type="nucleotide sequence ID" value="XM_045369857.2"/>
</dbReference>
<dbReference type="RefSeq" id="XP_045225793.1">
    <property type="nucleotide sequence ID" value="XM_045369858.2"/>
</dbReference>
<dbReference type="SMR" id="Q4R964"/>
<dbReference type="STRING" id="9541.ENSMFAP00000034722"/>
<dbReference type="GeneID" id="101926792"/>
<dbReference type="VEuPathDB" id="HostDB:ENSMFAG00000003843"/>
<dbReference type="eggNOG" id="KOG4145">
    <property type="taxonomic scope" value="Eukaryota"/>
</dbReference>
<dbReference type="Proteomes" id="UP000233100">
    <property type="component" value="Chromosome 13"/>
</dbReference>
<dbReference type="GO" id="GO:0004037">
    <property type="term" value="F:allantoicase activity"/>
    <property type="evidence" value="ECO:0007669"/>
    <property type="project" value="UniProtKB-EC"/>
</dbReference>
<dbReference type="GO" id="GO:0000256">
    <property type="term" value="P:allantoin catabolic process"/>
    <property type="evidence" value="ECO:0007669"/>
    <property type="project" value="InterPro"/>
</dbReference>
<dbReference type="FunFam" id="2.60.120.260:FF:000077">
    <property type="entry name" value="Probable allantoicase"/>
    <property type="match status" value="1"/>
</dbReference>
<dbReference type="FunFam" id="2.60.120.260:FF:000085">
    <property type="entry name" value="probable allantoicase"/>
    <property type="match status" value="1"/>
</dbReference>
<dbReference type="Gene3D" id="2.60.120.260">
    <property type="entry name" value="Galactose-binding domain-like"/>
    <property type="match status" value="2"/>
</dbReference>
<dbReference type="HAMAP" id="MF_00813">
    <property type="entry name" value="Allantoicase"/>
    <property type="match status" value="1"/>
</dbReference>
<dbReference type="InterPro" id="IPR005164">
    <property type="entry name" value="Allantoicase"/>
</dbReference>
<dbReference type="InterPro" id="IPR015908">
    <property type="entry name" value="Allantoicase_dom"/>
</dbReference>
<dbReference type="InterPro" id="IPR008979">
    <property type="entry name" value="Galactose-bd-like_sf"/>
</dbReference>
<dbReference type="NCBIfam" id="TIGR02961">
    <property type="entry name" value="allantoicase"/>
    <property type="match status" value="1"/>
</dbReference>
<dbReference type="PANTHER" id="PTHR12045">
    <property type="entry name" value="ALLANTOICASE"/>
    <property type="match status" value="1"/>
</dbReference>
<dbReference type="PANTHER" id="PTHR12045:SF3">
    <property type="entry name" value="INACTIVE ALLANTOICASE-RELATED"/>
    <property type="match status" value="1"/>
</dbReference>
<dbReference type="Pfam" id="PF03561">
    <property type="entry name" value="Allantoicase"/>
    <property type="match status" value="2"/>
</dbReference>
<dbReference type="PIRSF" id="PIRSF016516">
    <property type="entry name" value="Allantoicase"/>
    <property type="match status" value="1"/>
</dbReference>
<dbReference type="SUPFAM" id="SSF49785">
    <property type="entry name" value="Galactose-binding domain-like"/>
    <property type="match status" value="2"/>
</dbReference>
<sequence>MADAPKEGRLTRFLDFTQLTDMASESVGGKILFATDDFFAPAENLIKSDSPCFKEREYTEFGKWMDGWETRRKRIPGHDWCVLRLGIQGVIRAFDVDVSYFTGDYAPRMSIQAANLEEEKLPEIPERGIRTGAAATPEEFEAIAELKSDDWSYLVPMTELKPGNPASGHNYFLVNSQQRWTHIRLNIFPDGGIARLRVLGTGQKDWTATDPKEHADLVAIAFGGVCVGFSSAKFGHPNNIIGVGGAKSMADGWETARRLDRPPILENDDNGILLVPGCEWAVFRLAHPGVITRIEIDTKYFKGNAPDSCKVDGCVLTTQEEEDMIKQKWILPAHKWKPLLPVTKLSPNQSHLFDSLTLELQDVITHARLTIVPDGGVSRLRLRGFPSSICLLRPREKPMMKFSVGFKANP</sequence>
<feature type="chain" id="PRO_0000205906" description="Probable inactive allantoicase">
    <location>
        <begin position="1"/>
        <end position="410"/>
    </location>
</feature>
<proteinExistence type="evidence at transcript level"/>
<accession>Q4R964</accession>
<name>ALLC_MACFA</name>